<name>RS17_STRT2</name>
<sequence length="86" mass="10008">MERNQRKTLVGRVVSDKMDKTITVVVETKRNHPVYGKRINYSKKYKAHDENNVAKEGDIVRIMETRPLSATKHFRLVEVVEEAVII</sequence>
<accession>Q5M2C2</accession>
<feature type="chain" id="PRO_0000233581" description="Small ribosomal subunit protein uS17">
    <location>
        <begin position="1"/>
        <end position="86"/>
    </location>
</feature>
<gene>
    <name evidence="1" type="primary">rpsQ</name>
    <name type="ordered locus">stu1925</name>
</gene>
<protein>
    <recommendedName>
        <fullName evidence="1">Small ribosomal subunit protein uS17</fullName>
    </recommendedName>
    <alternativeName>
        <fullName evidence="2">30S ribosomal protein S17</fullName>
    </alternativeName>
</protein>
<dbReference type="EMBL" id="CP000023">
    <property type="protein sequence ID" value="AAV61523.1"/>
    <property type="molecule type" value="Genomic_DNA"/>
</dbReference>
<dbReference type="RefSeq" id="WP_002944482.1">
    <property type="nucleotide sequence ID" value="NC_006448.1"/>
</dbReference>
<dbReference type="SMR" id="Q5M2C2"/>
<dbReference type="STRING" id="264199.stu1925"/>
<dbReference type="GeneID" id="66899653"/>
<dbReference type="KEGG" id="stl:stu1925"/>
<dbReference type="eggNOG" id="COG0186">
    <property type="taxonomic scope" value="Bacteria"/>
</dbReference>
<dbReference type="HOGENOM" id="CLU_073626_1_0_9"/>
<dbReference type="Proteomes" id="UP000001170">
    <property type="component" value="Chromosome"/>
</dbReference>
<dbReference type="GO" id="GO:0022627">
    <property type="term" value="C:cytosolic small ribosomal subunit"/>
    <property type="evidence" value="ECO:0007669"/>
    <property type="project" value="TreeGrafter"/>
</dbReference>
<dbReference type="GO" id="GO:0019843">
    <property type="term" value="F:rRNA binding"/>
    <property type="evidence" value="ECO:0007669"/>
    <property type="project" value="UniProtKB-UniRule"/>
</dbReference>
<dbReference type="GO" id="GO:0003735">
    <property type="term" value="F:structural constituent of ribosome"/>
    <property type="evidence" value="ECO:0007669"/>
    <property type="project" value="InterPro"/>
</dbReference>
<dbReference type="GO" id="GO:0006412">
    <property type="term" value="P:translation"/>
    <property type="evidence" value="ECO:0007669"/>
    <property type="project" value="UniProtKB-UniRule"/>
</dbReference>
<dbReference type="CDD" id="cd00364">
    <property type="entry name" value="Ribosomal_uS17"/>
    <property type="match status" value="1"/>
</dbReference>
<dbReference type="FunFam" id="2.40.50.140:FF:000026">
    <property type="entry name" value="30S ribosomal protein S17"/>
    <property type="match status" value="1"/>
</dbReference>
<dbReference type="Gene3D" id="2.40.50.140">
    <property type="entry name" value="Nucleic acid-binding proteins"/>
    <property type="match status" value="1"/>
</dbReference>
<dbReference type="HAMAP" id="MF_01345_B">
    <property type="entry name" value="Ribosomal_uS17_B"/>
    <property type="match status" value="1"/>
</dbReference>
<dbReference type="InterPro" id="IPR012340">
    <property type="entry name" value="NA-bd_OB-fold"/>
</dbReference>
<dbReference type="InterPro" id="IPR000266">
    <property type="entry name" value="Ribosomal_uS17"/>
</dbReference>
<dbReference type="InterPro" id="IPR019984">
    <property type="entry name" value="Ribosomal_uS17_bact/chlr"/>
</dbReference>
<dbReference type="InterPro" id="IPR019979">
    <property type="entry name" value="Ribosomal_uS17_CS"/>
</dbReference>
<dbReference type="NCBIfam" id="NF004123">
    <property type="entry name" value="PRK05610.1"/>
    <property type="match status" value="1"/>
</dbReference>
<dbReference type="NCBIfam" id="TIGR03635">
    <property type="entry name" value="uS17_bact"/>
    <property type="match status" value="1"/>
</dbReference>
<dbReference type="PANTHER" id="PTHR10744">
    <property type="entry name" value="40S RIBOSOMAL PROTEIN S11 FAMILY MEMBER"/>
    <property type="match status" value="1"/>
</dbReference>
<dbReference type="PANTHER" id="PTHR10744:SF1">
    <property type="entry name" value="SMALL RIBOSOMAL SUBUNIT PROTEIN US17M"/>
    <property type="match status" value="1"/>
</dbReference>
<dbReference type="Pfam" id="PF00366">
    <property type="entry name" value="Ribosomal_S17"/>
    <property type="match status" value="1"/>
</dbReference>
<dbReference type="PRINTS" id="PR00973">
    <property type="entry name" value="RIBOSOMALS17"/>
</dbReference>
<dbReference type="SUPFAM" id="SSF50249">
    <property type="entry name" value="Nucleic acid-binding proteins"/>
    <property type="match status" value="1"/>
</dbReference>
<dbReference type="PROSITE" id="PS00056">
    <property type="entry name" value="RIBOSOMAL_S17"/>
    <property type="match status" value="1"/>
</dbReference>
<organism>
    <name type="scientific">Streptococcus thermophilus (strain ATCC BAA-250 / LMG 18311)</name>
    <dbReference type="NCBI Taxonomy" id="264199"/>
    <lineage>
        <taxon>Bacteria</taxon>
        <taxon>Bacillati</taxon>
        <taxon>Bacillota</taxon>
        <taxon>Bacilli</taxon>
        <taxon>Lactobacillales</taxon>
        <taxon>Streptococcaceae</taxon>
        <taxon>Streptococcus</taxon>
    </lineage>
</organism>
<reference key="1">
    <citation type="journal article" date="2004" name="Nat. Biotechnol.">
        <title>Complete sequence and comparative genome analysis of the dairy bacterium Streptococcus thermophilus.</title>
        <authorList>
            <person name="Bolotin A."/>
            <person name="Quinquis B."/>
            <person name="Renault P."/>
            <person name="Sorokin A."/>
            <person name="Ehrlich S.D."/>
            <person name="Kulakauskas S."/>
            <person name="Lapidus A."/>
            <person name="Goltsman E."/>
            <person name="Mazur M."/>
            <person name="Pusch G.D."/>
            <person name="Fonstein M."/>
            <person name="Overbeek R."/>
            <person name="Kyprides N."/>
            <person name="Purnelle B."/>
            <person name="Prozzi D."/>
            <person name="Ngui K."/>
            <person name="Masuy D."/>
            <person name="Hancy F."/>
            <person name="Burteau S."/>
            <person name="Boutry M."/>
            <person name="Delcour J."/>
            <person name="Goffeau A."/>
            <person name="Hols P."/>
        </authorList>
    </citation>
    <scope>NUCLEOTIDE SEQUENCE [LARGE SCALE GENOMIC DNA]</scope>
    <source>
        <strain>ATCC BAA-250 / LMG 18311</strain>
    </source>
</reference>
<comment type="function">
    <text evidence="1">One of the primary rRNA binding proteins, it binds specifically to the 5'-end of 16S ribosomal RNA.</text>
</comment>
<comment type="subunit">
    <text evidence="1">Part of the 30S ribosomal subunit.</text>
</comment>
<comment type="similarity">
    <text evidence="1">Belongs to the universal ribosomal protein uS17 family.</text>
</comment>
<proteinExistence type="inferred from homology"/>
<keyword id="KW-1185">Reference proteome</keyword>
<keyword id="KW-0687">Ribonucleoprotein</keyword>
<keyword id="KW-0689">Ribosomal protein</keyword>
<keyword id="KW-0694">RNA-binding</keyword>
<keyword id="KW-0699">rRNA-binding</keyword>
<evidence type="ECO:0000255" key="1">
    <source>
        <dbReference type="HAMAP-Rule" id="MF_01345"/>
    </source>
</evidence>
<evidence type="ECO:0000305" key="2"/>